<reference key="1">
    <citation type="journal article" date="2004" name="Genome Res.">
        <title>The status, quality, and expansion of the NIH full-length cDNA project: the Mammalian Gene Collection (MGC).</title>
        <authorList>
            <consortium name="The MGC Project Team"/>
        </authorList>
    </citation>
    <scope>NUCLEOTIDE SEQUENCE [LARGE SCALE MRNA]</scope>
    <source>
        <tissue>Brain</tissue>
    </source>
</reference>
<feature type="chain" id="PRO_0000248185" description="Ubiquitin-like protein 3">
    <location>
        <begin position="1"/>
        <end position="114"/>
    </location>
</feature>
<feature type="propeptide" id="PRO_0000248186" description="Removed in mature form" evidence="4">
    <location>
        <begin position="115"/>
        <end position="117"/>
    </location>
</feature>
<feature type="domain" description="Ubiquitin-like" evidence="3">
    <location>
        <begin position="10"/>
        <end position="88"/>
    </location>
</feature>
<feature type="modified residue" description="Cysteine methyl ester" evidence="4">
    <location>
        <position position="114"/>
    </location>
</feature>
<feature type="lipid moiety-binding region" description="S-palmitoyl cysteine" evidence="2">
    <location>
        <position position="113"/>
    </location>
</feature>
<feature type="lipid moiety-binding region" description="S-geranylgeranyl cysteine" evidence="2">
    <location>
        <position position="114"/>
    </location>
</feature>
<evidence type="ECO:0000250" key="1"/>
<evidence type="ECO:0000250" key="2">
    <source>
        <dbReference type="UniProtKB" id="O95164"/>
    </source>
</evidence>
<evidence type="ECO:0000255" key="3">
    <source>
        <dbReference type="PROSITE-ProRule" id="PRU00214"/>
    </source>
</evidence>
<evidence type="ECO:0000305" key="4"/>
<gene>
    <name type="primary">Ubl3</name>
</gene>
<organism>
    <name type="scientific">Rattus norvegicus</name>
    <name type="common">Rat</name>
    <dbReference type="NCBI Taxonomy" id="10116"/>
    <lineage>
        <taxon>Eukaryota</taxon>
        <taxon>Metazoa</taxon>
        <taxon>Chordata</taxon>
        <taxon>Craniata</taxon>
        <taxon>Vertebrata</taxon>
        <taxon>Euteleostomi</taxon>
        <taxon>Mammalia</taxon>
        <taxon>Eutheria</taxon>
        <taxon>Euarchontoglires</taxon>
        <taxon>Glires</taxon>
        <taxon>Rodentia</taxon>
        <taxon>Myomorpha</taxon>
        <taxon>Muroidea</taxon>
        <taxon>Muridae</taxon>
        <taxon>Murinae</taxon>
        <taxon>Rattus</taxon>
    </lineage>
</organism>
<protein>
    <recommendedName>
        <fullName>Ubiquitin-like protein 3</fullName>
    </recommendedName>
    <alternativeName>
        <fullName>Membrane-anchored ubiquitin-fold protein</fullName>
        <shortName>MUB</shortName>
    </alternativeName>
</protein>
<name>UBL3_RAT</name>
<dbReference type="EMBL" id="BC091342">
    <property type="protein sequence ID" value="AAH91342.1"/>
    <property type="molecule type" value="mRNA"/>
</dbReference>
<dbReference type="RefSeq" id="NP_001015030.1">
    <property type="nucleotide sequence ID" value="NM_001015030.1"/>
</dbReference>
<dbReference type="BMRB" id="Q5BJT2"/>
<dbReference type="SMR" id="Q5BJT2"/>
<dbReference type="FunCoup" id="Q5BJT2">
    <property type="interactions" value="1656"/>
</dbReference>
<dbReference type="STRING" id="10116.ENSRNOP00000057940"/>
<dbReference type="PhosphoSitePlus" id="Q5BJT2"/>
<dbReference type="SwissPalm" id="Q5BJT2"/>
<dbReference type="PaxDb" id="10116-ENSRNOP00000057940"/>
<dbReference type="GeneID" id="363869"/>
<dbReference type="KEGG" id="rno:363869"/>
<dbReference type="UCSC" id="RGD:1305431">
    <property type="organism name" value="rat"/>
</dbReference>
<dbReference type="AGR" id="RGD:1305431"/>
<dbReference type="CTD" id="5412"/>
<dbReference type="RGD" id="1305431">
    <property type="gene designation" value="Ubl3"/>
</dbReference>
<dbReference type="eggNOG" id="ENOG502RYGN">
    <property type="taxonomic scope" value="Eukaryota"/>
</dbReference>
<dbReference type="HOGENOM" id="CLU_151471_0_0_1"/>
<dbReference type="InParanoid" id="Q5BJT2"/>
<dbReference type="OrthoDB" id="1043111at2759"/>
<dbReference type="PhylomeDB" id="Q5BJT2"/>
<dbReference type="TreeFam" id="TF314489"/>
<dbReference type="PRO" id="PR:Q5BJT2"/>
<dbReference type="Proteomes" id="UP000002494">
    <property type="component" value="Chromosome 12"/>
</dbReference>
<dbReference type="Bgee" id="ENSRNOG00000000921">
    <property type="expression patterns" value="Expressed in Ammon's horn and 19 other cell types or tissues"/>
</dbReference>
<dbReference type="GO" id="GO:0005886">
    <property type="term" value="C:plasma membrane"/>
    <property type="evidence" value="ECO:0007669"/>
    <property type="project" value="UniProtKB-SubCell"/>
</dbReference>
<dbReference type="CDD" id="cd17048">
    <property type="entry name" value="Ubl_UBL3"/>
    <property type="match status" value="1"/>
</dbReference>
<dbReference type="FunFam" id="3.10.20.90:FF:000167">
    <property type="entry name" value="Ubiquitin-like 3a"/>
    <property type="match status" value="1"/>
</dbReference>
<dbReference type="Gene3D" id="3.10.20.90">
    <property type="entry name" value="Phosphatidylinositol 3-kinase Catalytic Subunit, Chain A, domain 1"/>
    <property type="match status" value="1"/>
</dbReference>
<dbReference type="InterPro" id="IPR017000">
    <property type="entry name" value="MUB"/>
</dbReference>
<dbReference type="InterPro" id="IPR000626">
    <property type="entry name" value="Ubiquitin-like_dom"/>
</dbReference>
<dbReference type="InterPro" id="IPR029071">
    <property type="entry name" value="Ubiquitin-like_domsf"/>
</dbReference>
<dbReference type="InterPro" id="IPR040015">
    <property type="entry name" value="UBL3-like"/>
</dbReference>
<dbReference type="InterPro" id="IPR039540">
    <property type="entry name" value="UBL3-like_ubiquitin_dom"/>
</dbReference>
<dbReference type="InterPro" id="IPR047977">
    <property type="entry name" value="UBL3_Ubl_met"/>
</dbReference>
<dbReference type="PANTHER" id="PTHR13169:SF0">
    <property type="entry name" value="UBIQUITIN-LIKE PROTEIN 3"/>
    <property type="match status" value="1"/>
</dbReference>
<dbReference type="PANTHER" id="PTHR13169">
    <property type="entry name" value="UBIQUITIN-LIKE PROTEIN 3 HCG-1 PROTEIN"/>
    <property type="match status" value="1"/>
</dbReference>
<dbReference type="Pfam" id="PF13881">
    <property type="entry name" value="Rad60-SLD_2"/>
    <property type="match status" value="1"/>
</dbReference>
<dbReference type="PIRSF" id="PIRSF032572">
    <property type="entry name" value="MUB"/>
    <property type="match status" value="1"/>
</dbReference>
<dbReference type="SUPFAM" id="SSF54236">
    <property type="entry name" value="Ubiquitin-like"/>
    <property type="match status" value="1"/>
</dbReference>
<dbReference type="PROSITE" id="PS50053">
    <property type="entry name" value="UBIQUITIN_2"/>
    <property type="match status" value="1"/>
</dbReference>
<comment type="subcellular location">
    <subcellularLocation>
        <location evidence="1">Cell membrane</location>
        <topology evidence="1">Lipid-anchor</topology>
    </subcellularLocation>
</comment>
<accession>Q5BJT2</accession>
<sequence length="117" mass="13180">MSSHVPADMINLRLILVSGKTKEFLFSPNDSASDIAKHVYDNWPMDWEEEQVSSPNILRLIYQGRFLHGNVTLGALKLPFGKTTVMHLVARETLPEPNSQGQRNREKTGESNCCVIL</sequence>
<proteinExistence type="inferred from homology"/>
<keyword id="KW-1003">Cell membrane</keyword>
<keyword id="KW-0449">Lipoprotein</keyword>
<keyword id="KW-0472">Membrane</keyword>
<keyword id="KW-0488">Methylation</keyword>
<keyword id="KW-0564">Palmitate</keyword>
<keyword id="KW-0636">Prenylation</keyword>
<keyword id="KW-1185">Reference proteome</keyword>